<sequence length="114" mass="10807">MKKKILAFGLISALFCSTPAMADMNRTTKGALLGAGVGLLTGNGVNGVLKGAAVGAGVGAVTEKGRDGKNARKGAKVGAAVGAVTGVLTGNGLEGAIKGAVIGGTGGAILGKMK</sequence>
<organism>
    <name type="scientific">Escherichia coli O6:H1 (strain CFT073 / ATCC 700928 / UPEC)</name>
    <dbReference type="NCBI Taxonomy" id="199310"/>
    <lineage>
        <taxon>Bacteria</taxon>
        <taxon>Pseudomonadati</taxon>
        <taxon>Pseudomonadota</taxon>
        <taxon>Gammaproteobacteria</taxon>
        <taxon>Enterobacterales</taxon>
        <taxon>Enterobacteriaceae</taxon>
        <taxon>Escherichia</taxon>
    </lineage>
</organism>
<dbReference type="EMBL" id="AE014075">
    <property type="protein sequence ID" value="AAN80082.1"/>
    <property type="status" value="ALT_INIT"/>
    <property type="molecule type" value="Genomic_DNA"/>
</dbReference>
<dbReference type="PIR" id="A64863">
    <property type="entry name" value="A64863"/>
</dbReference>
<dbReference type="RefSeq" id="WP_000726974.1">
    <property type="nucleotide sequence ID" value="NZ_CP051263.1"/>
</dbReference>
<dbReference type="STRING" id="199310.c1617"/>
<dbReference type="KEGG" id="ecc:c1617"/>
<dbReference type="eggNOG" id="ENOG5032XK9">
    <property type="taxonomic scope" value="Bacteria"/>
</dbReference>
<dbReference type="HOGENOM" id="CLU_164687_0_0_6"/>
<dbReference type="BioCyc" id="ECOL199310:C1617-MONOMER"/>
<dbReference type="Proteomes" id="UP000001410">
    <property type="component" value="Chromosome"/>
</dbReference>
<dbReference type="HAMAP" id="MF_01455">
    <property type="entry name" value="UPF0757"/>
    <property type="match status" value="1"/>
</dbReference>
<dbReference type="InterPro" id="IPR025693">
    <property type="entry name" value="Gly-zipper_OmpA-like_dom"/>
</dbReference>
<dbReference type="InterPro" id="IPR027367">
    <property type="entry name" value="Gly-zipper_YMGG"/>
</dbReference>
<dbReference type="InterPro" id="IPR022833">
    <property type="entry name" value="UPF0757_YmgG"/>
</dbReference>
<dbReference type="Pfam" id="PF13436">
    <property type="entry name" value="Gly-zipper_OmpA"/>
    <property type="match status" value="1"/>
</dbReference>
<dbReference type="Pfam" id="PF13441">
    <property type="entry name" value="Gly-zipper_YMGG"/>
    <property type="match status" value="1"/>
</dbReference>
<accession>Q8FI35</accession>
<gene>
    <name evidence="1" type="primary">ymgG</name>
    <name type="ordered locus">c1617</name>
</gene>
<reference key="1">
    <citation type="journal article" date="2002" name="Proc. Natl. Acad. Sci. U.S.A.">
        <title>Extensive mosaic structure revealed by the complete genome sequence of uropathogenic Escherichia coli.</title>
        <authorList>
            <person name="Welch R.A."/>
            <person name="Burland V."/>
            <person name="Plunkett G. III"/>
            <person name="Redford P."/>
            <person name="Roesch P."/>
            <person name="Rasko D."/>
            <person name="Buckles E.L."/>
            <person name="Liou S.-R."/>
            <person name="Boutin A."/>
            <person name="Hackett J."/>
            <person name="Stroud D."/>
            <person name="Mayhew G.F."/>
            <person name="Rose D.J."/>
            <person name="Zhou S."/>
            <person name="Schwartz D.C."/>
            <person name="Perna N.T."/>
            <person name="Mobley H.L.T."/>
            <person name="Donnenberg M.S."/>
            <person name="Blattner F.R."/>
        </authorList>
    </citation>
    <scope>NUCLEOTIDE SEQUENCE [LARGE SCALE GENOMIC DNA]</scope>
    <source>
        <strain>CFT073 / ATCC 700928 / UPEC</strain>
    </source>
</reference>
<name>YMGG_ECOL6</name>
<keyword id="KW-1185">Reference proteome</keyword>
<feature type="chain" id="PRO_0000252222" description="UPF0757 protein YmgG">
    <location>
        <begin position="1"/>
        <end position="114"/>
    </location>
</feature>
<protein>
    <recommendedName>
        <fullName evidence="1">UPF0757 protein YmgG</fullName>
    </recommendedName>
</protein>
<comment type="similarity">
    <text evidence="1">Belongs to the UPF0757 family.</text>
</comment>
<comment type="sequence caution" evidence="2">
    <conflict type="erroneous initiation">
        <sequence resource="EMBL-CDS" id="AAN80082"/>
    </conflict>
</comment>
<proteinExistence type="inferred from homology"/>
<evidence type="ECO:0000255" key="1">
    <source>
        <dbReference type="HAMAP-Rule" id="MF_01455"/>
    </source>
</evidence>
<evidence type="ECO:0000305" key="2"/>